<dbReference type="EMBL" id="AE008923">
    <property type="protein sequence ID" value="AAM35754.1"/>
    <property type="status" value="ALT_INIT"/>
    <property type="molecule type" value="Genomic_DNA"/>
</dbReference>
<dbReference type="SMR" id="Q8PP22"/>
<dbReference type="KEGG" id="xac:XAC0866"/>
<dbReference type="eggNOG" id="COG1452">
    <property type="taxonomic scope" value="Bacteria"/>
</dbReference>
<dbReference type="HOGENOM" id="CLU_009039_0_0_6"/>
<dbReference type="Proteomes" id="UP000000576">
    <property type="component" value="Chromosome"/>
</dbReference>
<dbReference type="GO" id="GO:0009279">
    <property type="term" value="C:cell outer membrane"/>
    <property type="evidence" value="ECO:0007669"/>
    <property type="project" value="UniProtKB-SubCell"/>
</dbReference>
<dbReference type="GO" id="GO:1990351">
    <property type="term" value="C:transporter complex"/>
    <property type="evidence" value="ECO:0007669"/>
    <property type="project" value="TreeGrafter"/>
</dbReference>
<dbReference type="GO" id="GO:0043165">
    <property type="term" value="P:Gram-negative-bacterium-type cell outer membrane assembly"/>
    <property type="evidence" value="ECO:0007669"/>
    <property type="project" value="UniProtKB-UniRule"/>
</dbReference>
<dbReference type="GO" id="GO:0015920">
    <property type="term" value="P:lipopolysaccharide transport"/>
    <property type="evidence" value="ECO:0007669"/>
    <property type="project" value="InterPro"/>
</dbReference>
<dbReference type="Gene3D" id="2.60.450.10">
    <property type="entry name" value="Lipopolysaccharide (LPS) transport protein A like domain"/>
    <property type="match status" value="1"/>
</dbReference>
<dbReference type="HAMAP" id="MF_01411">
    <property type="entry name" value="LPS_assembly_LptD"/>
    <property type="match status" value="1"/>
</dbReference>
<dbReference type="InterPro" id="IPR020889">
    <property type="entry name" value="LipoPS_assembly_LptD"/>
</dbReference>
<dbReference type="InterPro" id="IPR050218">
    <property type="entry name" value="LptD"/>
</dbReference>
<dbReference type="InterPro" id="IPR007543">
    <property type="entry name" value="LptD_C"/>
</dbReference>
<dbReference type="InterPro" id="IPR005653">
    <property type="entry name" value="OstA-like_N"/>
</dbReference>
<dbReference type="NCBIfam" id="NF003358">
    <property type="entry name" value="PRK04423.1"/>
    <property type="match status" value="1"/>
</dbReference>
<dbReference type="PANTHER" id="PTHR30189">
    <property type="entry name" value="LPS-ASSEMBLY PROTEIN"/>
    <property type="match status" value="1"/>
</dbReference>
<dbReference type="PANTHER" id="PTHR30189:SF1">
    <property type="entry name" value="LPS-ASSEMBLY PROTEIN LPTD"/>
    <property type="match status" value="1"/>
</dbReference>
<dbReference type="Pfam" id="PF04453">
    <property type="entry name" value="LptD"/>
    <property type="match status" value="1"/>
</dbReference>
<dbReference type="Pfam" id="PF03968">
    <property type="entry name" value="LptD_N"/>
    <property type="match status" value="1"/>
</dbReference>
<accession>Q8PP22</accession>
<proteinExistence type="inferred from homology"/>
<comment type="function">
    <text evidence="1">Together with LptE, is involved in the assembly of lipopolysaccharide (LPS) at the surface of the outer membrane.</text>
</comment>
<comment type="subunit">
    <text evidence="1">Component of the lipopolysaccharide transport and assembly complex. Interacts with LptE and LptA.</text>
</comment>
<comment type="subcellular location">
    <subcellularLocation>
        <location evidence="1">Cell outer membrane</location>
    </subcellularLocation>
</comment>
<comment type="similarity">
    <text evidence="1">Belongs to the LptD family.</text>
</comment>
<comment type="sequence caution" evidence="2">
    <conflict type="erroneous initiation">
        <sequence resource="EMBL-CDS" id="AAM35754"/>
    </conflict>
</comment>
<keyword id="KW-0998">Cell outer membrane</keyword>
<keyword id="KW-0472">Membrane</keyword>
<keyword id="KW-0732">Signal</keyword>
<sequence>MRRALRLLPLPLSIAICLPAMAADKPLNWGLCPAVDPLPGFDGAPAADPKAAEMRQQLPTDIEGDQLSGTSTTPQYQGNVALKRGDQFLGADNLRMDTETGNYIAEGNVRYQDTSFRMVADRAEGNQDTDTHKVTNIQYQLVERRGNGDAESVDLQGQVGQMHRSTYTTCDPSQPIWRVRAPEIDVDNEEGFGTARNAVLQIGKVPVLYFPWFKFPIDDRRQTGLLFPQFGLSGRNGFDYLQPIYLNLAPNYDATLLPRYMSKRGFMFGTEFRYLYEGGRGEVTGNYLPNDKLRDKDRGSVFYSGYHNVNTHWQARSSISWVSDTRYVEDFTSRLNGMGSASSLQSTVGIYGTGETWTAGLMADRWQLTDYTLDEQALPYNRQPRAYFTWEKPFGIFEAGVYAEAVRFTHDDSYFVQPPSPSAPGETNNRDDNDEYVRTNIRNKEYGSGARLDVKPYISMPLSGAAWFLTPTVAWRYTAYQLDSTLANTAPLTGNRTPSRSLPIASLDAGLYFDRETSLFGTNYLNTLEPRMYYLYVPYRDQDDLPVFDTRPFTFSYGQLFRDTRYTGADRQNDANQLTLAVTSRWLRQDDGREKLSLSAGQILYFSDSLVTINNSNNSAAGSEQTVEQGKSAWVADANYMINDRWSMGATYQWNPNSRKEDLASLRTRYLLNNDGIINLAYRYRRNLTDNSDQLKQADFSFLYPINPSWSAVGRYYYSLLDRKPLEIIGGVQWDSCCLAVRGLVRRFVRNRDGEMDNSIQIEFVLKGLSSFGQNTDRTLRRAILGYYRDDLYLVPPSNTTTNPDDYDPNLIP</sequence>
<gene>
    <name evidence="1" type="primary">lptD</name>
    <name type="synonym">imp</name>
    <name type="synonym">ostA</name>
    <name type="ordered locus">XAC0866</name>
</gene>
<protein>
    <recommendedName>
        <fullName evidence="1">LPS-assembly protein LptD</fullName>
    </recommendedName>
</protein>
<reference key="1">
    <citation type="journal article" date="2002" name="Nature">
        <title>Comparison of the genomes of two Xanthomonas pathogens with differing host specificities.</title>
        <authorList>
            <person name="da Silva A.C.R."/>
            <person name="Ferro J.A."/>
            <person name="Reinach F.C."/>
            <person name="Farah C.S."/>
            <person name="Furlan L.R."/>
            <person name="Quaggio R.B."/>
            <person name="Monteiro-Vitorello C.B."/>
            <person name="Van Sluys M.A."/>
            <person name="Almeida N.F. Jr."/>
            <person name="Alves L.M.C."/>
            <person name="do Amaral A.M."/>
            <person name="Bertolini M.C."/>
            <person name="Camargo L.E.A."/>
            <person name="Camarotte G."/>
            <person name="Cannavan F."/>
            <person name="Cardozo J."/>
            <person name="Chambergo F."/>
            <person name="Ciapina L.P."/>
            <person name="Cicarelli R.M.B."/>
            <person name="Coutinho L.L."/>
            <person name="Cursino-Santos J.R."/>
            <person name="El-Dorry H."/>
            <person name="Faria J.B."/>
            <person name="Ferreira A.J.S."/>
            <person name="Ferreira R.C.C."/>
            <person name="Ferro M.I.T."/>
            <person name="Formighieri E.F."/>
            <person name="Franco M.C."/>
            <person name="Greggio C.C."/>
            <person name="Gruber A."/>
            <person name="Katsuyama A.M."/>
            <person name="Kishi L.T."/>
            <person name="Leite R.P."/>
            <person name="Lemos E.G.M."/>
            <person name="Lemos M.V.F."/>
            <person name="Locali E.C."/>
            <person name="Machado M.A."/>
            <person name="Madeira A.M.B.N."/>
            <person name="Martinez-Rossi N.M."/>
            <person name="Martins E.C."/>
            <person name="Meidanis J."/>
            <person name="Menck C.F.M."/>
            <person name="Miyaki C.Y."/>
            <person name="Moon D.H."/>
            <person name="Moreira L.M."/>
            <person name="Novo M.T.M."/>
            <person name="Okura V.K."/>
            <person name="Oliveira M.C."/>
            <person name="Oliveira V.R."/>
            <person name="Pereira H.A."/>
            <person name="Rossi A."/>
            <person name="Sena J.A.D."/>
            <person name="Silva C."/>
            <person name="de Souza R.F."/>
            <person name="Spinola L.A.F."/>
            <person name="Takita M.A."/>
            <person name="Tamura R.E."/>
            <person name="Teixeira E.C."/>
            <person name="Tezza R.I.D."/>
            <person name="Trindade dos Santos M."/>
            <person name="Truffi D."/>
            <person name="Tsai S.M."/>
            <person name="White F.F."/>
            <person name="Setubal J.C."/>
            <person name="Kitajima J.P."/>
        </authorList>
    </citation>
    <scope>NUCLEOTIDE SEQUENCE [LARGE SCALE GENOMIC DNA]</scope>
    <source>
        <strain>306</strain>
    </source>
</reference>
<feature type="signal peptide" evidence="1">
    <location>
        <begin position="1"/>
        <end position="22"/>
    </location>
</feature>
<feature type="chain" id="PRO_0000020296" description="LPS-assembly protein LptD">
    <location>
        <begin position="23"/>
        <end position="813"/>
    </location>
</feature>
<organism>
    <name type="scientific">Xanthomonas axonopodis pv. citri (strain 306)</name>
    <dbReference type="NCBI Taxonomy" id="190486"/>
    <lineage>
        <taxon>Bacteria</taxon>
        <taxon>Pseudomonadati</taxon>
        <taxon>Pseudomonadota</taxon>
        <taxon>Gammaproteobacteria</taxon>
        <taxon>Lysobacterales</taxon>
        <taxon>Lysobacteraceae</taxon>
        <taxon>Xanthomonas</taxon>
    </lineage>
</organism>
<evidence type="ECO:0000255" key="1">
    <source>
        <dbReference type="HAMAP-Rule" id="MF_01411"/>
    </source>
</evidence>
<evidence type="ECO:0000305" key="2"/>
<name>LPTD_XANAC</name>